<gene>
    <name type="primary">lacX</name>
</gene>
<proteinExistence type="predicted"/>
<dbReference type="EMBL" id="X60456">
    <property type="protein sequence ID" value="CAA42987.1"/>
    <property type="molecule type" value="Genomic_DNA"/>
</dbReference>
<dbReference type="PIR" id="S25782">
    <property type="entry name" value="S25782"/>
</dbReference>
<dbReference type="SMR" id="P42096"/>
<dbReference type="GO" id="GO:0030246">
    <property type="term" value="F:carbohydrate binding"/>
    <property type="evidence" value="ECO:0007669"/>
    <property type="project" value="InterPro"/>
</dbReference>
<dbReference type="GO" id="GO:0016853">
    <property type="term" value="F:isomerase activity"/>
    <property type="evidence" value="ECO:0007669"/>
    <property type="project" value="InterPro"/>
</dbReference>
<dbReference type="GO" id="GO:0005975">
    <property type="term" value="P:carbohydrate metabolic process"/>
    <property type="evidence" value="ECO:0007669"/>
    <property type="project" value="InterPro"/>
</dbReference>
<dbReference type="CDD" id="cd09024">
    <property type="entry name" value="Aldose_epim_lacX"/>
    <property type="match status" value="1"/>
</dbReference>
<dbReference type="Gene3D" id="2.70.98.10">
    <property type="match status" value="1"/>
</dbReference>
<dbReference type="InterPro" id="IPR008183">
    <property type="entry name" value="Aldose_1/G6P_1-epimerase"/>
</dbReference>
<dbReference type="InterPro" id="IPR011013">
    <property type="entry name" value="Gal_mutarotase_sf_dom"/>
</dbReference>
<dbReference type="InterPro" id="IPR014718">
    <property type="entry name" value="GH-type_carb-bd"/>
</dbReference>
<dbReference type="InterPro" id="IPR037481">
    <property type="entry name" value="LacX"/>
</dbReference>
<dbReference type="PANTHER" id="PTHR11122">
    <property type="entry name" value="APOSPORY-ASSOCIATED PROTEIN C-RELATED"/>
    <property type="match status" value="1"/>
</dbReference>
<dbReference type="PANTHER" id="PTHR11122:SF13">
    <property type="entry name" value="GLUCOSE-6-PHOSPHATE 1-EPIMERASE"/>
    <property type="match status" value="1"/>
</dbReference>
<dbReference type="Pfam" id="PF01263">
    <property type="entry name" value="Aldose_epim"/>
    <property type="match status" value="1"/>
</dbReference>
<dbReference type="SUPFAM" id="SSF74650">
    <property type="entry name" value="Galactose mutarotase-like"/>
    <property type="match status" value="1"/>
</dbReference>
<sequence length="299" mass="34491">MTIELKNEYLTVQFKTLGGQLTSIKDKDGLEYLWQADPEYWNGQAPILFPICGSLRNDWAIYRPQDRPFFTGLIRRHGFVRKEEFTLEEVNENSVTFSIKPNAEMLDNYLYQFELRVVYTLNGKSIRTEFQVTNLETEKTMPYFIGAHPAFNCPLVEGEKYEDYSLEFSEVESCSIPKSFPETGLLDLQDRTPFLENQKSLDLDYSLFSHDAITLDRLKSRSVTLRSRKSGKGLRVDFDDFPNLILWSTSNKSPFIALEPWSGLSTSLEEGNILEDKPQVTKVLPLDTSKKSYDITILN</sequence>
<feature type="chain" id="PRO_0000084347" description="Protein LacX, chromosomal">
    <location>
        <begin position="1"/>
        <end position="299"/>
    </location>
</feature>
<organism>
    <name type="scientific">Lactococcus lactis subsp. lactis</name>
    <name type="common">Streptococcus lactis</name>
    <dbReference type="NCBI Taxonomy" id="1360"/>
    <lineage>
        <taxon>Bacteria</taxon>
        <taxon>Bacillati</taxon>
        <taxon>Bacillota</taxon>
        <taxon>Bacilli</taxon>
        <taxon>Lactobacillales</taxon>
        <taxon>Streptococcaceae</taxon>
        <taxon>Lactococcus</taxon>
    </lineage>
</organism>
<reference key="1">
    <citation type="journal article" date="1992" name="Gene">
        <title>Nonidentity between plasmid and chromosomal copies of ISS1-like sequences in Lactococcus lactis subsp. lactis CNRZ270 and their possible role in chromosomal integration of plasmid genes.</title>
        <authorList>
            <person name="Huang D.C."/>
            <person name="Novel M."/>
            <person name="Huang X.F."/>
            <person name="Novel G."/>
        </authorList>
    </citation>
    <scope>NUCLEOTIDE SEQUENCE [GENOMIC DNA]</scope>
    <source>
        <strain>CNRZ 270</strain>
    </source>
</reference>
<protein>
    <recommendedName>
        <fullName>Protein LacX, chromosomal</fullName>
    </recommendedName>
</protein>
<accession>P42096</accession>
<name>LACXC_LACLL</name>